<feature type="chain" id="PRO_0000189485" description="2-C-methyl-D-erythritol 2,4-cyclodiphosphate synthase">
    <location>
        <begin position="1"/>
        <end position="159"/>
    </location>
</feature>
<feature type="binding site" evidence="1">
    <location>
        <begin position="12"/>
        <end position="14"/>
    </location>
    <ligand>
        <name>4-CDP-2-C-methyl-D-erythritol 2-phosphate</name>
        <dbReference type="ChEBI" id="CHEBI:57919"/>
    </ligand>
</feature>
<feature type="binding site" evidence="1">
    <location>
        <position position="12"/>
    </location>
    <ligand>
        <name>a divalent metal cation</name>
        <dbReference type="ChEBI" id="CHEBI:60240"/>
    </ligand>
</feature>
<feature type="binding site" evidence="1">
    <location>
        <position position="14"/>
    </location>
    <ligand>
        <name>a divalent metal cation</name>
        <dbReference type="ChEBI" id="CHEBI:60240"/>
    </ligand>
</feature>
<feature type="binding site" evidence="1">
    <location>
        <begin position="38"/>
        <end position="39"/>
    </location>
    <ligand>
        <name>4-CDP-2-C-methyl-D-erythritol 2-phosphate</name>
        <dbReference type="ChEBI" id="CHEBI:57919"/>
    </ligand>
</feature>
<feature type="binding site" evidence="1">
    <location>
        <position position="46"/>
    </location>
    <ligand>
        <name>a divalent metal cation</name>
        <dbReference type="ChEBI" id="CHEBI:60240"/>
    </ligand>
</feature>
<feature type="binding site" evidence="1">
    <location>
        <begin position="60"/>
        <end position="62"/>
    </location>
    <ligand>
        <name>4-CDP-2-C-methyl-D-erythritol 2-phosphate</name>
        <dbReference type="ChEBI" id="CHEBI:57919"/>
    </ligand>
</feature>
<feature type="binding site" evidence="1">
    <location>
        <begin position="133"/>
        <end position="136"/>
    </location>
    <ligand>
        <name>4-CDP-2-C-methyl-D-erythritol 2-phosphate</name>
        <dbReference type="ChEBI" id="CHEBI:57919"/>
    </ligand>
</feature>
<feature type="binding site" evidence="1">
    <location>
        <position position="143"/>
    </location>
    <ligand>
        <name>4-CDP-2-C-methyl-D-erythritol 2-phosphate</name>
        <dbReference type="ChEBI" id="CHEBI:57919"/>
    </ligand>
</feature>
<feature type="site" description="Transition state stabilizer" evidence="1">
    <location>
        <position position="38"/>
    </location>
</feature>
<feature type="site" description="Transition state stabilizer" evidence="1">
    <location>
        <position position="134"/>
    </location>
</feature>
<sequence length="159" mass="16458">MNQLPRVGLGTDVHPIEPGRPCWLVGLLFPSADGCAGHSDGDVAVHALCDAVLSAAGLGDIGEVFGVDDPRWQGVSGADMLRHVVVLITQHGYRVGNAVVQVIGNRPKIGWRRLEAQAVLSRLLNAPVSVSATTTDGLGLTGRGEGLAAIATALVVSLR</sequence>
<reference key="1">
    <citation type="journal article" date="1998" name="Nature">
        <title>Deciphering the biology of Mycobacterium tuberculosis from the complete genome sequence.</title>
        <authorList>
            <person name="Cole S.T."/>
            <person name="Brosch R."/>
            <person name="Parkhill J."/>
            <person name="Garnier T."/>
            <person name="Churcher C.M."/>
            <person name="Harris D.E."/>
            <person name="Gordon S.V."/>
            <person name="Eiglmeier K."/>
            <person name="Gas S."/>
            <person name="Barry C.E. III"/>
            <person name="Tekaia F."/>
            <person name="Badcock K."/>
            <person name="Basham D."/>
            <person name="Brown D."/>
            <person name="Chillingworth T."/>
            <person name="Connor R."/>
            <person name="Davies R.M."/>
            <person name="Devlin K."/>
            <person name="Feltwell T."/>
            <person name="Gentles S."/>
            <person name="Hamlin N."/>
            <person name="Holroyd S."/>
            <person name="Hornsby T."/>
            <person name="Jagels K."/>
            <person name="Krogh A."/>
            <person name="McLean J."/>
            <person name="Moule S."/>
            <person name="Murphy L.D."/>
            <person name="Oliver S."/>
            <person name="Osborne J."/>
            <person name="Quail M.A."/>
            <person name="Rajandream M.A."/>
            <person name="Rogers J."/>
            <person name="Rutter S."/>
            <person name="Seeger K."/>
            <person name="Skelton S."/>
            <person name="Squares S."/>
            <person name="Squares R."/>
            <person name="Sulston J.E."/>
            <person name="Taylor K."/>
            <person name="Whitehead S."/>
            <person name="Barrell B.G."/>
        </authorList>
    </citation>
    <scope>NUCLEOTIDE SEQUENCE [LARGE SCALE GENOMIC DNA]</scope>
    <source>
        <strain>ATCC 25618 / H37Rv</strain>
    </source>
</reference>
<reference key="2">
    <citation type="journal article" date="2008" name="BMC Syst. Biol.">
        <title>targetTB: a target identification pipeline for Mycobacterium tuberculosis through an interactome, reactome and genome-scale structural analysis.</title>
        <authorList>
            <person name="Raman K."/>
            <person name="Yeturu K."/>
            <person name="Chandra N."/>
        </authorList>
    </citation>
    <scope>IDENTIFICATION AS A DRUG TARGET [LARGE SCALE ANALYSIS]</scope>
</reference>
<reference key="3">
    <citation type="journal article" date="2010" name="Chem. Biol.">
        <title>Synthesis of 4-diphosphocytidyl-2-C-methyl-D-erythritol 2-phosphate and kinetic studies of Mycobacterium tuberculosis IspF.</title>
        <authorList>
            <person name="Narayanasamy P."/>
            <person name="Eoh H."/>
            <person name="Brennan P.J."/>
            <person name="Crick D.C."/>
        </authorList>
    </citation>
    <scope>FUNCTION AS A MECPP-SYNTHASE</scope>
    <scope>CATALYTIC ACTIVITY</scope>
    <scope>BIOPHYSICOCHEMICAL PROPERTIES</scope>
    <scope>COFACTOR</scope>
</reference>
<reference key="4">
    <citation type="journal article" date="2011" name="Mol. Cell. Proteomics">
        <title>Proteogenomic analysis of Mycobacterium tuberculosis by high resolution mass spectrometry.</title>
        <authorList>
            <person name="Kelkar D.S."/>
            <person name="Kumar D."/>
            <person name="Kumar P."/>
            <person name="Balakrishnan L."/>
            <person name="Muthusamy B."/>
            <person name="Yadav A.K."/>
            <person name="Shrivastava P."/>
            <person name="Marimuthu A."/>
            <person name="Anand S."/>
            <person name="Sundaram H."/>
            <person name="Kingsbury R."/>
            <person name="Harsha H.C."/>
            <person name="Nair B."/>
            <person name="Prasad T.S."/>
            <person name="Chauhan D.S."/>
            <person name="Katoch K."/>
            <person name="Katoch V.M."/>
            <person name="Kumar P."/>
            <person name="Chaerkady R."/>
            <person name="Ramachandran S."/>
            <person name="Dash D."/>
            <person name="Pandey A."/>
        </authorList>
    </citation>
    <scope>IDENTIFICATION BY MASS SPECTROMETRY [LARGE SCALE ANALYSIS]</scope>
    <source>
        <strain>ATCC 25618 / H37Rv</strain>
    </source>
</reference>
<proteinExistence type="evidence at protein level"/>
<organism>
    <name type="scientific">Mycobacterium tuberculosis (strain ATCC 25618 / H37Rv)</name>
    <dbReference type="NCBI Taxonomy" id="83332"/>
    <lineage>
        <taxon>Bacteria</taxon>
        <taxon>Bacillati</taxon>
        <taxon>Actinomycetota</taxon>
        <taxon>Actinomycetes</taxon>
        <taxon>Mycobacteriales</taxon>
        <taxon>Mycobacteriaceae</taxon>
        <taxon>Mycobacterium</taxon>
        <taxon>Mycobacterium tuberculosis complex</taxon>
    </lineage>
</organism>
<dbReference type="EC" id="4.6.1.12" evidence="1"/>
<dbReference type="EMBL" id="AL123456">
    <property type="protein sequence ID" value="CCP46404.1"/>
    <property type="molecule type" value="Genomic_DNA"/>
</dbReference>
<dbReference type="PIR" id="C70607">
    <property type="entry name" value="C70607"/>
</dbReference>
<dbReference type="RefSeq" id="NP_218098.1">
    <property type="nucleotide sequence ID" value="NC_000962.3"/>
</dbReference>
<dbReference type="RefSeq" id="WP_003419432.1">
    <property type="nucleotide sequence ID" value="NZ_NVQJ01000014.1"/>
</dbReference>
<dbReference type="SMR" id="P9WKG5"/>
<dbReference type="FunCoup" id="P9WKG5">
    <property type="interactions" value="254"/>
</dbReference>
<dbReference type="STRING" id="83332.Rv3581c"/>
<dbReference type="ChEMBL" id="CHEMBL3217377"/>
<dbReference type="PaxDb" id="83332-Rv3581c"/>
<dbReference type="DNASU" id="888221"/>
<dbReference type="GeneID" id="45427569"/>
<dbReference type="GeneID" id="888221"/>
<dbReference type="KEGG" id="mtu:Rv3581c"/>
<dbReference type="KEGG" id="mtv:RVBD_3581c"/>
<dbReference type="TubercuList" id="Rv3581c"/>
<dbReference type="eggNOG" id="COG0245">
    <property type="taxonomic scope" value="Bacteria"/>
</dbReference>
<dbReference type="InParanoid" id="P9WKG5"/>
<dbReference type="OrthoDB" id="9804336at2"/>
<dbReference type="PhylomeDB" id="P9WKG5"/>
<dbReference type="BRENDA" id="4.6.1.12">
    <property type="organism ID" value="3445"/>
</dbReference>
<dbReference type="SABIO-RK" id="P9WKG5"/>
<dbReference type="UniPathway" id="UPA00056">
    <property type="reaction ID" value="UER00095"/>
</dbReference>
<dbReference type="Proteomes" id="UP000001584">
    <property type="component" value="Chromosome"/>
</dbReference>
<dbReference type="GO" id="GO:0008685">
    <property type="term" value="F:2-C-methyl-D-erythritol 2,4-cyclodiphosphate synthase activity"/>
    <property type="evidence" value="ECO:0000314"/>
    <property type="project" value="MTBBASE"/>
</dbReference>
<dbReference type="GO" id="GO:0046872">
    <property type="term" value="F:metal ion binding"/>
    <property type="evidence" value="ECO:0007669"/>
    <property type="project" value="UniProtKB-KW"/>
</dbReference>
<dbReference type="GO" id="GO:0019288">
    <property type="term" value="P:isopentenyl diphosphate biosynthetic process, methylerythritol 4-phosphate pathway"/>
    <property type="evidence" value="ECO:0007669"/>
    <property type="project" value="UniProtKB-UniRule"/>
</dbReference>
<dbReference type="GO" id="GO:0051483">
    <property type="term" value="P:terpenoid biosynthetic process, mevalonate-independent"/>
    <property type="evidence" value="ECO:0000314"/>
    <property type="project" value="MTBBASE"/>
</dbReference>
<dbReference type="CDD" id="cd00554">
    <property type="entry name" value="MECDP_synthase"/>
    <property type="match status" value="1"/>
</dbReference>
<dbReference type="FunFam" id="3.30.1330.50:FF:000003">
    <property type="entry name" value="2-C-methyl-D-erythritol 2,4-cyclodiphosphate synthase"/>
    <property type="match status" value="1"/>
</dbReference>
<dbReference type="Gene3D" id="3.30.1330.50">
    <property type="entry name" value="2-C-methyl-D-erythritol 2,4-cyclodiphosphate synthase"/>
    <property type="match status" value="1"/>
</dbReference>
<dbReference type="HAMAP" id="MF_00107">
    <property type="entry name" value="IspF"/>
    <property type="match status" value="1"/>
</dbReference>
<dbReference type="InterPro" id="IPR003526">
    <property type="entry name" value="MECDP_synthase"/>
</dbReference>
<dbReference type="InterPro" id="IPR020555">
    <property type="entry name" value="MECDP_synthase_CS"/>
</dbReference>
<dbReference type="InterPro" id="IPR036571">
    <property type="entry name" value="MECDP_synthase_sf"/>
</dbReference>
<dbReference type="NCBIfam" id="TIGR00151">
    <property type="entry name" value="ispF"/>
    <property type="match status" value="1"/>
</dbReference>
<dbReference type="PANTHER" id="PTHR43181">
    <property type="entry name" value="2-C-METHYL-D-ERYTHRITOL 2,4-CYCLODIPHOSPHATE SYNTHASE, CHLOROPLASTIC"/>
    <property type="match status" value="1"/>
</dbReference>
<dbReference type="PANTHER" id="PTHR43181:SF1">
    <property type="entry name" value="2-C-METHYL-D-ERYTHRITOL 2,4-CYCLODIPHOSPHATE SYNTHASE, CHLOROPLASTIC"/>
    <property type="match status" value="1"/>
</dbReference>
<dbReference type="Pfam" id="PF02542">
    <property type="entry name" value="YgbB"/>
    <property type="match status" value="1"/>
</dbReference>
<dbReference type="SUPFAM" id="SSF69765">
    <property type="entry name" value="IpsF-like"/>
    <property type="match status" value="1"/>
</dbReference>
<dbReference type="PROSITE" id="PS01350">
    <property type="entry name" value="ISPF"/>
    <property type="match status" value="1"/>
</dbReference>
<protein>
    <recommendedName>
        <fullName evidence="1">2-C-methyl-D-erythritol 2,4-cyclodiphosphate synthase</fullName>
        <shortName evidence="1">MECDP-synthase</shortName>
        <shortName evidence="1">MECPP-synthase</shortName>
        <shortName evidence="1">MECPS</shortName>
        <ecNumber evidence="1">4.6.1.12</ecNumber>
    </recommendedName>
</protein>
<evidence type="ECO:0000255" key="1">
    <source>
        <dbReference type="HAMAP-Rule" id="MF_00107"/>
    </source>
</evidence>
<evidence type="ECO:0000269" key="2">
    <source>
    </source>
</evidence>
<evidence type="ECO:0000305" key="3"/>
<gene>
    <name evidence="1" type="primary">ispF</name>
    <name type="ordered locus">Rv3581c</name>
    <name type="ORF">MTCY06G11.28c</name>
</gene>
<keyword id="KW-0414">Isoprene biosynthesis</keyword>
<keyword id="KW-0456">Lyase</keyword>
<keyword id="KW-0479">Metal-binding</keyword>
<keyword id="KW-1185">Reference proteome</keyword>
<comment type="function">
    <text evidence="1 2">Involved in the biosynthesis of isopentenyl diphosphate (IPP) and dimethylallyl diphosphate (DMAPP), two major building blocks of isoprenoid compounds. Catalyzes the conversion of 4-diphosphocytidyl-2-C-methyl-D-erythritol 2-phosphate (CDP-ME2P) to 2-C-methyl-D-erythritol 2,4-cyclodiphosphate (ME-CPP) with a corresponding release of cytidine 5-monophosphate (CMP).</text>
</comment>
<comment type="catalytic activity">
    <reaction evidence="1 2">
        <text>4-CDP-2-C-methyl-D-erythritol 2-phosphate = 2-C-methyl-D-erythritol 2,4-cyclic diphosphate + CMP</text>
        <dbReference type="Rhea" id="RHEA:23864"/>
        <dbReference type="ChEBI" id="CHEBI:57919"/>
        <dbReference type="ChEBI" id="CHEBI:58483"/>
        <dbReference type="ChEBI" id="CHEBI:60377"/>
        <dbReference type="EC" id="4.6.1.12"/>
    </reaction>
</comment>
<comment type="cofactor">
    <cofactor evidence="1 2">
        <name>a divalent metal cation</name>
        <dbReference type="ChEBI" id="CHEBI:60240"/>
    </cofactor>
    <text evidence="1 2">Binds 1 divalent metal cation per subunit.</text>
</comment>
<comment type="biophysicochemical properties">
    <kinetics>
        <KM evidence="2">81.1 uM for CDP-ME2P (at pH 8 and at 37 degrees Celsius)</KM>
        <Vmax evidence="2">81.6 nmol/sec/mg enzyme (at pH 8 and at 37 degrees Celsius)</Vmax>
    </kinetics>
</comment>
<comment type="pathway">
    <text evidence="1">Isoprenoid biosynthesis; isopentenyl diphosphate biosynthesis via DXP pathway; isopentenyl diphosphate from 1-deoxy-D-xylulose 5-phosphate: step 4/6.</text>
</comment>
<comment type="subunit">
    <text evidence="1">Homotrimer.</text>
</comment>
<comment type="miscellaneous">
    <text>Was identified as a high-confidence drug target.</text>
</comment>
<comment type="similarity">
    <text evidence="1 3">Belongs to the IspF family.</text>
</comment>
<name>ISPF_MYCTU</name>
<accession>P9WKG5</accession>
<accession>L0TD81</accession>
<accession>P65183</accession>
<accession>P96863</accession>